<comment type="function">
    <text evidence="2">Injection into mice produces severe neurotoxic effects such as circular movements, aggressive behavior, dyspnea, tonic-clonic convulsion and death.</text>
</comment>
<comment type="subcellular location">
    <subcellularLocation>
        <location evidence="4">Secreted</location>
    </subcellularLocation>
    <subcellularLocation>
        <location evidence="4">Nematocyst</location>
    </subcellularLocation>
</comment>
<comment type="mass spectrometry" mass="4958.0" method="Electrospray" evidence="2"/>
<comment type="toxic dose">
    <text evidence="2">LD(50) is 400 +/- 83 ug/kg by intraperitoneal injection into mice.</text>
</comment>
<feature type="peptide" id="PRO_0000045116" description="Granulitoxin">
    <location>
        <begin position="1"/>
        <end position="21" status="greater than"/>
    </location>
</feature>
<feature type="region of interest" description="Disordered" evidence="1">
    <location>
        <begin position="1"/>
        <end position="21"/>
    </location>
</feature>
<feature type="non-terminal residue">
    <location>
        <position position="21"/>
    </location>
</feature>
<proteinExistence type="evidence at protein level"/>
<name>TXGRX_BUNCN</name>
<sequence length="21" mass="1961">AKTGILDSDGPTVAGNSLSGT</sequence>
<reference key="1">
    <citation type="journal article" date="1998" name="Braz. J. Med. Biol. Res.">
        <title>Partial sequence and toxic effects of granulitoxin, a neurotoxic peptide from the sea anemone Bundosoma granulifera.</title>
        <authorList>
            <person name="Santana A.N.C."/>
            <person name="Leite A.B."/>
            <person name="Franca M.S."/>
            <person name="Franca L."/>
            <person name="Vale O.C."/>
            <person name="Cunha R.B."/>
            <person name="Ricart C.A.O."/>
            <person name="Sousa M.V."/>
            <person name="Carvalho K.M."/>
        </authorList>
    </citation>
    <scope>PROTEIN SEQUENCE</scope>
    <scope>FUNCTION</scope>
    <scope>TOXIC DOSE</scope>
    <scope>MASS SPECTROMETRY</scope>
    <source>
        <tissue>Nematoblast</tissue>
    </source>
</reference>
<dbReference type="GO" id="GO:0005576">
    <property type="term" value="C:extracellular region"/>
    <property type="evidence" value="ECO:0007669"/>
    <property type="project" value="UniProtKB-SubCell"/>
</dbReference>
<dbReference type="GO" id="GO:0042151">
    <property type="term" value="C:nematocyst"/>
    <property type="evidence" value="ECO:0007669"/>
    <property type="project" value="UniProtKB-SubCell"/>
</dbReference>
<dbReference type="GO" id="GO:0090729">
    <property type="term" value="F:toxin activity"/>
    <property type="evidence" value="ECO:0007669"/>
    <property type="project" value="UniProtKB-KW"/>
</dbReference>
<organism>
    <name type="scientific">Bunodosoma cangicum</name>
    <name type="common">Sea anemone</name>
    <dbReference type="NCBI Taxonomy" id="138296"/>
    <lineage>
        <taxon>Eukaryota</taxon>
        <taxon>Metazoa</taxon>
        <taxon>Cnidaria</taxon>
        <taxon>Anthozoa</taxon>
        <taxon>Hexacorallia</taxon>
        <taxon>Actiniaria</taxon>
        <taxon>Actiniidae</taxon>
        <taxon>Bunodosoma</taxon>
    </lineage>
</organism>
<accession>P58305</accession>
<protein>
    <recommendedName>
        <fullName evidence="3">Granulitoxin</fullName>
        <shortName evidence="3">GRX</shortName>
    </recommendedName>
</protein>
<evidence type="ECO:0000256" key="1">
    <source>
        <dbReference type="SAM" id="MobiDB-lite"/>
    </source>
</evidence>
<evidence type="ECO:0000269" key="2">
    <source>
    </source>
</evidence>
<evidence type="ECO:0000303" key="3">
    <source>
    </source>
</evidence>
<evidence type="ECO:0000305" key="4">
    <source>
    </source>
</evidence>
<keyword id="KW-0903">Direct protein sequencing</keyword>
<keyword id="KW-0166">Nematocyst</keyword>
<keyword id="KW-0528">Neurotoxin</keyword>
<keyword id="KW-0964">Secreted</keyword>
<keyword id="KW-0800">Toxin</keyword>